<gene>
    <name evidence="1" type="primary">greA</name>
    <name type="ordered locus">Pnap_1776</name>
</gene>
<comment type="function">
    <text evidence="1">Necessary for efficient RNA polymerase transcription elongation past template-encoded arresting sites. The arresting sites in DNA have the property of trapping a certain fraction of elongating RNA polymerases that pass through, resulting in locked ternary complexes. Cleavage of the nascent transcript by cleavage factors such as GreA or GreB allows the resumption of elongation from the new 3'terminus. GreA releases sequences of 2 to 3 nucleotides.</text>
</comment>
<comment type="similarity">
    <text evidence="1">Belongs to the GreA/GreB family.</text>
</comment>
<keyword id="KW-0238">DNA-binding</keyword>
<keyword id="KW-1185">Reference proteome</keyword>
<keyword id="KW-0804">Transcription</keyword>
<keyword id="KW-0805">Transcription regulation</keyword>
<accession>A1VN58</accession>
<name>GREA_POLNA</name>
<proteinExistence type="inferred from homology"/>
<organism>
    <name type="scientific">Polaromonas naphthalenivorans (strain CJ2)</name>
    <dbReference type="NCBI Taxonomy" id="365044"/>
    <lineage>
        <taxon>Bacteria</taxon>
        <taxon>Pseudomonadati</taxon>
        <taxon>Pseudomonadota</taxon>
        <taxon>Betaproteobacteria</taxon>
        <taxon>Burkholderiales</taxon>
        <taxon>Comamonadaceae</taxon>
        <taxon>Polaromonas</taxon>
    </lineage>
</organism>
<feature type="chain" id="PRO_1000094187" description="Transcription elongation factor GreA">
    <location>
        <begin position="1"/>
        <end position="158"/>
    </location>
</feature>
<evidence type="ECO:0000255" key="1">
    <source>
        <dbReference type="HAMAP-Rule" id="MF_00105"/>
    </source>
</evidence>
<protein>
    <recommendedName>
        <fullName evidence="1">Transcription elongation factor GreA</fullName>
    </recommendedName>
    <alternativeName>
        <fullName evidence="1">Transcript cleavage factor GreA</fullName>
    </alternativeName>
</protein>
<dbReference type="EMBL" id="CP000529">
    <property type="protein sequence ID" value="ABM37086.1"/>
    <property type="molecule type" value="Genomic_DNA"/>
</dbReference>
<dbReference type="RefSeq" id="WP_011801167.1">
    <property type="nucleotide sequence ID" value="NC_008781.1"/>
</dbReference>
<dbReference type="SMR" id="A1VN58"/>
<dbReference type="STRING" id="365044.Pnap_1776"/>
<dbReference type="KEGG" id="pna:Pnap_1776"/>
<dbReference type="eggNOG" id="COG0782">
    <property type="taxonomic scope" value="Bacteria"/>
</dbReference>
<dbReference type="HOGENOM" id="CLU_101379_2_0_4"/>
<dbReference type="OrthoDB" id="9808774at2"/>
<dbReference type="Proteomes" id="UP000000644">
    <property type="component" value="Chromosome"/>
</dbReference>
<dbReference type="GO" id="GO:0003677">
    <property type="term" value="F:DNA binding"/>
    <property type="evidence" value="ECO:0007669"/>
    <property type="project" value="UniProtKB-UniRule"/>
</dbReference>
<dbReference type="GO" id="GO:0070063">
    <property type="term" value="F:RNA polymerase binding"/>
    <property type="evidence" value="ECO:0007669"/>
    <property type="project" value="InterPro"/>
</dbReference>
<dbReference type="GO" id="GO:0006354">
    <property type="term" value="P:DNA-templated transcription elongation"/>
    <property type="evidence" value="ECO:0007669"/>
    <property type="project" value="TreeGrafter"/>
</dbReference>
<dbReference type="GO" id="GO:0032784">
    <property type="term" value="P:regulation of DNA-templated transcription elongation"/>
    <property type="evidence" value="ECO:0007669"/>
    <property type="project" value="UniProtKB-UniRule"/>
</dbReference>
<dbReference type="FunFam" id="1.10.287.180:FF:000001">
    <property type="entry name" value="Transcription elongation factor GreA"/>
    <property type="match status" value="1"/>
</dbReference>
<dbReference type="FunFam" id="3.10.50.30:FF:000001">
    <property type="entry name" value="Transcription elongation factor GreA"/>
    <property type="match status" value="1"/>
</dbReference>
<dbReference type="Gene3D" id="3.10.50.30">
    <property type="entry name" value="Transcription elongation factor, GreA/GreB, C-terminal domain"/>
    <property type="match status" value="1"/>
</dbReference>
<dbReference type="Gene3D" id="1.10.287.180">
    <property type="entry name" value="Transcription elongation factor, GreA/GreB, N-terminal domain"/>
    <property type="match status" value="1"/>
</dbReference>
<dbReference type="HAMAP" id="MF_00105">
    <property type="entry name" value="GreA_GreB"/>
    <property type="match status" value="1"/>
</dbReference>
<dbReference type="InterPro" id="IPR036953">
    <property type="entry name" value="GreA/GreB_C_sf"/>
</dbReference>
<dbReference type="InterPro" id="IPR018151">
    <property type="entry name" value="TF_GreA/GreB_CS"/>
</dbReference>
<dbReference type="InterPro" id="IPR006359">
    <property type="entry name" value="Tscrpt_elong_fac_GreA"/>
</dbReference>
<dbReference type="InterPro" id="IPR028624">
    <property type="entry name" value="Tscrpt_elong_fac_GreA/B"/>
</dbReference>
<dbReference type="InterPro" id="IPR001437">
    <property type="entry name" value="Tscrpt_elong_fac_GreA/B_C"/>
</dbReference>
<dbReference type="InterPro" id="IPR023459">
    <property type="entry name" value="Tscrpt_elong_fac_GreA/B_fam"/>
</dbReference>
<dbReference type="InterPro" id="IPR022691">
    <property type="entry name" value="Tscrpt_elong_fac_GreA/B_N"/>
</dbReference>
<dbReference type="InterPro" id="IPR036805">
    <property type="entry name" value="Tscrpt_elong_fac_GreA/B_N_sf"/>
</dbReference>
<dbReference type="NCBIfam" id="TIGR01462">
    <property type="entry name" value="greA"/>
    <property type="match status" value="1"/>
</dbReference>
<dbReference type="NCBIfam" id="NF001261">
    <property type="entry name" value="PRK00226.1-2"/>
    <property type="match status" value="1"/>
</dbReference>
<dbReference type="NCBIfam" id="NF001263">
    <property type="entry name" value="PRK00226.1-4"/>
    <property type="match status" value="1"/>
</dbReference>
<dbReference type="NCBIfam" id="NF001264">
    <property type="entry name" value="PRK00226.1-5"/>
    <property type="match status" value="1"/>
</dbReference>
<dbReference type="PANTHER" id="PTHR30437">
    <property type="entry name" value="TRANSCRIPTION ELONGATION FACTOR GREA"/>
    <property type="match status" value="1"/>
</dbReference>
<dbReference type="PANTHER" id="PTHR30437:SF4">
    <property type="entry name" value="TRANSCRIPTION ELONGATION FACTOR GREA"/>
    <property type="match status" value="1"/>
</dbReference>
<dbReference type="Pfam" id="PF01272">
    <property type="entry name" value="GreA_GreB"/>
    <property type="match status" value="1"/>
</dbReference>
<dbReference type="Pfam" id="PF03449">
    <property type="entry name" value="GreA_GreB_N"/>
    <property type="match status" value="1"/>
</dbReference>
<dbReference type="PIRSF" id="PIRSF006092">
    <property type="entry name" value="GreA_GreB"/>
    <property type="match status" value="1"/>
</dbReference>
<dbReference type="SUPFAM" id="SSF54534">
    <property type="entry name" value="FKBP-like"/>
    <property type="match status" value="1"/>
</dbReference>
<dbReference type="SUPFAM" id="SSF46557">
    <property type="entry name" value="GreA transcript cleavage protein, N-terminal domain"/>
    <property type="match status" value="1"/>
</dbReference>
<dbReference type="PROSITE" id="PS00829">
    <property type="entry name" value="GREAB_1"/>
    <property type="match status" value="1"/>
</dbReference>
<reference key="1">
    <citation type="journal article" date="2009" name="Environ. Microbiol.">
        <title>The genome of Polaromonas naphthalenivorans strain CJ2, isolated from coal tar-contaminated sediment, reveals physiological and metabolic versatility and evolution through extensive horizontal gene transfer.</title>
        <authorList>
            <person name="Yagi J.M."/>
            <person name="Sims D."/>
            <person name="Brettin T."/>
            <person name="Bruce D."/>
            <person name="Madsen E.L."/>
        </authorList>
    </citation>
    <scope>NUCLEOTIDE SEQUENCE [LARGE SCALE GENOMIC DNA]</scope>
    <source>
        <strain>CJ2</strain>
    </source>
</reference>
<sequence length="158" mass="17141">MATLPITKRGAEKLKAELHNLKTVQRPWVINAISEARAQGDLSENAEYEVAKDRQGFIEGRIQEIEGKLSAAQVIDPTTFETGTRVVFGSTVKLEDEATGDSVTYQIVGEDEADIKLGLVNIGSPIARALIGKDEGDSAEVQAPGGIRRYEIVTVLYI</sequence>